<keyword id="KW-0007">Acetylation</keyword>
<keyword id="KW-0903">Direct protein sequencing</keyword>
<keyword id="KW-0472">Membrane</keyword>
<keyword id="KW-0496">Mitochondrion</keyword>
<keyword id="KW-0999">Mitochondrion inner membrane</keyword>
<keyword id="KW-0560">Oxidoreductase</keyword>
<keyword id="KW-1185">Reference proteome</keyword>
<keyword id="KW-0812">Transmembrane</keyword>
<keyword id="KW-1133">Transmembrane helix</keyword>
<gene>
    <name type="primary">COX7A2</name>
    <name type="synonym">COX7AL</name>
</gene>
<comment type="function">
    <text evidence="1">Component of the cytochrome c oxidase, the last enzyme in the mitochondrial electron transport chain which drives oxidative phosphorylation. The respiratory chain contains 3 multisubunit complexes succinate dehydrogenase (complex II, CII), ubiquinol-cytochrome c oxidoreductase (cytochrome b-c1 complex, complex III, CIII) and cytochrome c oxidase (complex IV, CIV), that cooperate to transfer electrons derived from NADH and succinate to molecular oxygen, creating an electrochemical gradient over the inner membrane that drives transmembrane transport and the ATP synthase. Cytochrome c oxidase is the component of the respiratory chain that catalyzes the reduction of oxygen to water. Electrons originating from reduced cytochrome c in the intermembrane space (IMS) are transferred via the dinuclear copper A center (CU(A)) of subunit 2 and heme A of subunit 1 to the active site in subunit 1, a binuclear center (BNC) formed by heme A3 and copper B (CU(B)). The BNC reduces molecular oxygen to 2 water molecules using 4 electrons from cytochrome c in the IMS and 4 protons from the mitochondrial matrix.</text>
</comment>
<comment type="pathway">
    <text evidence="1">Energy metabolism; oxidative phosphorylation.</text>
</comment>
<comment type="subunit">
    <text evidence="2">Component of the cytochrome c oxidase (complex IV, CIV), a multisubunit enzyme composed of 14 subunits. The complex is composed of a catalytic core of 3 subunits MT-CO1, MT-CO2 and MT-CO3, encoded in the mitochondrial DNA, and 11 supernumerary subunits COX4I, COX5A, COX5B, COX6A, COX6B, COX6C, COX7A, COX7B, COX7C, COX8 and NDUFA4, which are encoded in the nuclear genome. The complex exists as a monomer or a dimer and forms supercomplexes (SCs) in the inner mitochondrial membrane with NADH-ubiquinone oxidoreductase (complex I, CI) and ubiquinol-cytochrome c oxidoreductase (cytochrome b-c1 complex, complex III, CIII), resulting in different assemblies (supercomplex SCI(1)III(2)IV(1) and megacomplex MCI(2)III(2)IV(2)). Interacts with PET100.</text>
</comment>
<comment type="subcellular location">
    <subcellularLocation>
        <location evidence="2">Mitochondrion inner membrane</location>
        <topology evidence="2">Single-pass membrane protein</topology>
    </subcellularLocation>
</comment>
<comment type="similarity">
    <text evidence="4">Belongs to the cytochrome c oxidase VIIa family.</text>
</comment>
<reference key="1">
    <citation type="journal article" date="1995" name="Comp. Biochem. Physiol.">
        <title>Species-specific expression of cytochrome c oxidase isozymes.</title>
        <authorList>
            <person name="Linder D."/>
            <person name="Freund R."/>
            <person name="Kadenbach B."/>
        </authorList>
    </citation>
    <scope>PROTEIN SEQUENCE</scope>
    <source>
        <tissue>Heart</tissue>
        <tissue>Liver</tissue>
    </source>
</reference>
<accession>Q9TR29</accession>
<name>CX7A2_CANLF</name>
<evidence type="ECO:0000250" key="1">
    <source>
        <dbReference type="UniProtKB" id="P10174"/>
    </source>
</evidence>
<evidence type="ECO:0000250" key="2">
    <source>
        <dbReference type="UniProtKB" id="P14406"/>
    </source>
</evidence>
<evidence type="ECO:0000250" key="3">
    <source>
        <dbReference type="UniProtKB" id="P48771"/>
    </source>
</evidence>
<evidence type="ECO:0000305" key="4"/>
<organism>
    <name type="scientific">Canis lupus familiaris</name>
    <name type="common">Dog</name>
    <name type="synonym">Canis familiaris</name>
    <dbReference type="NCBI Taxonomy" id="9615"/>
    <lineage>
        <taxon>Eukaryota</taxon>
        <taxon>Metazoa</taxon>
        <taxon>Chordata</taxon>
        <taxon>Craniata</taxon>
        <taxon>Vertebrata</taxon>
        <taxon>Euteleostomi</taxon>
        <taxon>Mammalia</taxon>
        <taxon>Eutheria</taxon>
        <taxon>Laurasiatheria</taxon>
        <taxon>Carnivora</taxon>
        <taxon>Caniformia</taxon>
        <taxon>Canidae</taxon>
        <taxon>Canis</taxon>
    </lineage>
</organism>
<protein>
    <recommendedName>
        <fullName>Cytochrome c oxidase subunit 7A2, mitochondrial</fullName>
    </recommendedName>
    <alternativeName>
        <fullName>Cytochrome c oxidase subunit VIIa-liver/heart</fullName>
        <shortName>Cytochrome c oxidase subunit VIIa-L</shortName>
    </alternativeName>
</protein>
<feature type="chain" id="PRO_0000220998" description="Cytochrome c oxidase subunit 7A2, mitochondrial">
    <location>
        <begin position="1"/>
        <end position="29" status="greater than"/>
    </location>
</feature>
<feature type="modified residue" description="N6-acetyllysine" evidence="3">
    <location>
        <position position="10"/>
    </location>
</feature>
<feature type="non-terminal residue">
    <location>
        <position position="29"/>
    </location>
</feature>
<dbReference type="SMR" id="Q9TR29"/>
<dbReference type="STRING" id="9615.ENSCAFP00000040725"/>
<dbReference type="PaxDb" id="9612-ENSCAFP00000040725"/>
<dbReference type="eggNOG" id="ENOG502S4DT">
    <property type="taxonomic scope" value="Eukaryota"/>
</dbReference>
<dbReference type="InParanoid" id="Q9TR29"/>
<dbReference type="OrthoDB" id="9654250at2759"/>
<dbReference type="UniPathway" id="UPA00705"/>
<dbReference type="Proteomes" id="UP000002254">
    <property type="component" value="Unplaced"/>
</dbReference>
<dbReference type="Proteomes" id="UP000694429">
    <property type="component" value="Unplaced"/>
</dbReference>
<dbReference type="Proteomes" id="UP000694542">
    <property type="component" value="Unplaced"/>
</dbReference>
<dbReference type="Proteomes" id="UP000805418">
    <property type="component" value="Unplaced"/>
</dbReference>
<dbReference type="GO" id="GO:0005743">
    <property type="term" value="C:mitochondrial inner membrane"/>
    <property type="evidence" value="ECO:0007669"/>
    <property type="project" value="UniProtKB-SubCell"/>
</dbReference>
<dbReference type="GO" id="GO:0045277">
    <property type="term" value="C:respiratory chain complex IV"/>
    <property type="evidence" value="ECO:0007669"/>
    <property type="project" value="InterPro"/>
</dbReference>
<dbReference type="GO" id="GO:0016491">
    <property type="term" value="F:oxidoreductase activity"/>
    <property type="evidence" value="ECO:0007669"/>
    <property type="project" value="UniProtKB-KW"/>
</dbReference>
<dbReference type="GO" id="GO:0006123">
    <property type="term" value="P:mitochondrial electron transport, cytochrome c to oxygen"/>
    <property type="evidence" value="ECO:0007669"/>
    <property type="project" value="InterPro"/>
</dbReference>
<dbReference type="Gene3D" id="4.10.91.10">
    <property type="entry name" value="Cytochrome c oxidase, subunit VIIa"/>
    <property type="match status" value="1"/>
</dbReference>
<dbReference type="InterPro" id="IPR039297">
    <property type="entry name" value="COX7a"/>
</dbReference>
<dbReference type="InterPro" id="IPR036539">
    <property type="entry name" value="Cyt_c_oxidase_su7a_sf"/>
</dbReference>
<dbReference type="InterPro" id="IPR003177">
    <property type="entry name" value="Cytc_oxidase_su7a_met"/>
</dbReference>
<dbReference type="PANTHER" id="PTHR10510">
    <property type="entry name" value="CYTOCHROME C OXIDASE POLYPEPTIDE 7A"/>
    <property type="match status" value="1"/>
</dbReference>
<dbReference type="PANTHER" id="PTHR10510:SF15">
    <property type="entry name" value="CYTOCHROME C OXIDASE SUBUNIT 7A2, MITOCHONDRIAL"/>
    <property type="match status" value="1"/>
</dbReference>
<dbReference type="Pfam" id="PF02238">
    <property type="entry name" value="COX7a"/>
    <property type="match status" value="1"/>
</dbReference>
<dbReference type="SUPFAM" id="SSF81419">
    <property type="entry name" value="Mitochondrial cytochrome c oxidase subunit VIIa"/>
    <property type="match status" value="1"/>
</dbReference>
<sequence>FENKVPEKQKLFQEDNGIPVVLKGGVADA</sequence>
<proteinExistence type="evidence at protein level"/>